<sequence length="334" mass="36937">MKTLGEFIIEKQAEYPEAKGELSGILSSIRLAAKIIHREINRAGLSQDILGVAGSENIQGEAQMKLDVFANETMKKALLAREEVAGFASEEDDNFVAFENDRAKNAKYILMTDPLDGSSNIDVNVSVGTIFSIYKRVSPIGSPVTMEDFLQEGRKQVASGYVTYGSSTMLVYTTGNGVNGFTYDPSLGLFILSHPDMKIPTEGKYYSINEGQYVTFPMGVKKFIKYCQESDEATKRPYSSRYIGSLVSDFHRNLLKGGIYIYPTSTVYPKGKLRLLYEGNPMAFLAEQAGGMATDGFNPILDIKPSELHQRVPFFVGSTSMVKQADKFMQECAE</sequence>
<proteinExistence type="inferred from homology"/>
<reference key="1">
    <citation type="journal article" date="2008" name="J. Bacteriol.">
        <title>The complete genome sequence of Actinobacillus pleuropneumoniae L20 (serotype 5b).</title>
        <authorList>
            <person name="Foote S.J."/>
            <person name="Bosse J.T."/>
            <person name="Bouevitch A.B."/>
            <person name="Langford P.R."/>
            <person name="Young N.M."/>
            <person name="Nash J.H.E."/>
        </authorList>
    </citation>
    <scope>NUCLEOTIDE SEQUENCE [LARGE SCALE GENOMIC DNA]</scope>
    <source>
        <strain>L20</strain>
    </source>
</reference>
<organism>
    <name type="scientific">Actinobacillus pleuropneumoniae serotype 5b (strain L20)</name>
    <dbReference type="NCBI Taxonomy" id="416269"/>
    <lineage>
        <taxon>Bacteria</taxon>
        <taxon>Pseudomonadati</taxon>
        <taxon>Pseudomonadota</taxon>
        <taxon>Gammaproteobacteria</taxon>
        <taxon>Pasteurellales</taxon>
        <taxon>Pasteurellaceae</taxon>
        <taxon>Actinobacillus</taxon>
    </lineage>
</organism>
<evidence type="ECO:0000255" key="1">
    <source>
        <dbReference type="HAMAP-Rule" id="MF_01855"/>
    </source>
</evidence>
<dbReference type="EC" id="3.1.3.11" evidence="1"/>
<dbReference type="EMBL" id="CP000569">
    <property type="protein sequence ID" value="ABN74534.1"/>
    <property type="molecule type" value="Genomic_DNA"/>
</dbReference>
<dbReference type="RefSeq" id="WP_009875278.1">
    <property type="nucleotide sequence ID" value="NC_009053.1"/>
</dbReference>
<dbReference type="SMR" id="A3N298"/>
<dbReference type="STRING" id="416269.APL_1450"/>
<dbReference type="EnsemblBacteria" id="ABN74534">
    <property type="protein sequence ID" value="ABN74534"/>
    <property type="gene ID" value="APL_1450"/>
</dbReference>
<dbReference type="KEGG" id="apl:APL_1450"/>
<dbReference type="PATRIC" id="fig|416269.6.peg.1509"/>
<dbReference type="eggNOG" id="COG0158">
    <property type="taxonomic scope" value="Bacteria"/>
</dbReference>
<dbReference type="HOGENOM" id="CLU_039977_2_2_6"/>
<dbReference type="UniPathway" id="UPA00138"/>
<dbReference type="Proteomes" id="UP000001432">
    <property type="component" value="Chromosome"/>
</dbReference>
<dbReference type="GO" id="GO:0005829">
    <property type="term" value="C:cytosol"/>
    <property type="evidence" value="ECO:0007669"/>
    <property type="project" value="TreeGrafter"/>
</dbReference>
<dbReference type="GO" id="GO:0042132">
    <property type="term" value="F:fructose 1,6-bisphosphate 1-phosphatase activity"/>
    <property type="evidence" value="ECO:0007669"/>
    <property type="project" value="UniProtKB-UniRule"/>
</dbReference>
<dbReference type="GO" id="GO:0000287">
    <property type="term" value="F:magnesium ion binding"/>
    <property type="evidence" value="ECO:0007669"/>
    <property type="project" value="UniProtKB-UniRule"/>
</dbReference>
<dbReference type="GO" id="GO:0030388">
    <property type="term" value="P:fructose 1,6-bisphosphate metabolic process"/>
    <property type="evidence" value="ECO:0007669"/>
    <property type="project" value="TreeGrafter"/>
</dbReference>
<dbReference type="GO" id="GO:0006002">
    <property type="term" value="P:fructose 6-phosphate metabolic process"/>
    <property type="evidence" value="ECO:0007669"/>
    <property type="project" value="TreeGrafter"/>
</dbReference>
<dbReference type="GO" id="GO:0006000">
    <property type="term" value="P:fructose metabolic process"/>
    <property type="evidence" value="ECO:0007669"/>
    <property type="project" value="TreeGrafter"/>
</dbReference>
<dbReference type="GO" id="GO:0006094">
    <property type="term" value="P:gluconeogenesis"/>
    <property type="evidence" value="ECO:0007669"/>
    <property type="project" value="UniProtKB-UniRule"/>
</dbReference>
<dbReference type="GO" id="GO:0005986">
    <property type="term" value="P:sucrose biosynthetic process"/>
    <property type="evidence" value="ECO:0007669"/>
    <property type="project" value="TreeGrafter"/>
</dbReference>
<dbReference type="CDD" id="cd00354">
    <property type="entry name" value="FBPase"/>
    <property type="match status" value="1"/>
</dbReference>
<dbReference type="FunFam" id="3.30.540.10:FF:000002">
    <property type="entry name" value="Fructose-1,6-bisphosphatase class 1"/>
    <property type="match status" value="1"/>
</dbReference>
<dbReference type="FunFam" id="3.40.190.80:FF:000001">
    <property type="entry name" value="Fructose-1,6-bisphosphatase class 1"/>
    <property type="match status" value="1"/>
</dbReference>
<dbReference type="Gene3D" id="3.40.190.80">
    <property type="match status" value="1"/>
</dbReference>
<dbReference type="Gene3D" id="3.30.540.10">
    <property type="entry name" value="Fructose-1,6-Bisphosphatase, subunit A, domain 1"/>
    <property type="match status" value="1"/>
</dbReference>
<dbReference type="HAMAP" id="MF_01855">
    <property type="entry name" value="FBPase_class1"/>
    <property type="match status" value="1"/>
</dbReference>
<dbReference type="InterPro" id="IPR044015">
    <property type="entry name" value="FBPase_C_dom"/>
</dbReference>
<dbReference type="InterPro" id="IPR000146">
    <property type="entry name" value="FBPase_class-1"/>
</dbReference>
<dbReference type="InterPro" id="IPR033391">
    <property type="entry name" value="FBPase_N"/>
</dbReference>
<dbReference type="InterPro" id="IPR028343">
    <property type="entry name" value="FBPtase"/>
</dbReference>
<dbReference type="InterPro" id="IPR020548">
    <property type="entry name" value="Fructose_bisphosphatase_AS"/>
</dbReference>
<dbReference type="NCBIfam" id="NF006778">
    <property type="entry name" value="PRK09293.1-1"/>
    <property type="match status" value="1"/>
</dbReference>
<dbReference type="PANTHER" id="PTHR11556">
    <property type="entry name" value="FRUCTOSE-1,6-BISPHOSPHATASE-RELATED"/>
    <property type="match status" value="1"/>
</dbReference>
<dbReference type="PANTHER" id="PTHR11556:SF35">
    <property type="entry name" value="SEDOHEPTULOSE-1,7-BISPHOSPHATASE, CHLOROPLASTIC"/>
    <property type="match status" value="1"/>
</dbReference>
<dbReference type="Pfam" id="PF00316">
    <property type="entry name" value="FBPase"/>
    <property type="match status" value="1"/>
</dbReference>
<dbReference type="Pfam" id="PF18913">
    <property type="entry name" value="FBPase_C"/>
    <property type="match status" value="1"/>
</dbReference>
<dbReference type="PIRSF" id="PIRSF500210">
    <property type="entry name" value="FBPtase"/>
    <property type="match status" value="1"/>
</dbReference>
<dbReference type="PIRSF" id="PIRSF000904">
    <property type="entry name" value="FBPtase_SBPase"/>
    <property type="match status" value="1"/>
</dbReference>
<dbReference type="PRINTS" id="PR00115">
    <property type="entry name" value="F16BPHPHTASE"/>
</dbReference>
<dbReference type="SUPFAM" id="SSF56655">
    <property type="entry name" value="Carbohydrate phosphatase"/>
    <property type="match status" value="1"/>
</dbReference>
<dbReference type="PROSITE" id="PS00124">
    <property type="entry name" value="FBPASE"/>
    <property type="match status" value="1"/>
</dbReference>
<protein>
    <recommendedName>
        <fullName evidence="1">Fructose-1,6-bisphosphatase class 1</fullName>
        <shortName evidence="1">FBPase class 1</shortName>
        <ecNumber evidence="1">3.1.3.11</ecNumber>
    </recommendedName>
    <alternativeName>
        <fullName evidence="1">D-fructose-1,6-bisphosphate 1-phosphohydrolase class 1</fullName>
    </alternativeName>
</protein>
<keyword id="KW-0119">Carbohydrate metabolism</keyword>
<keyword id="KW-0963">Cytoplasm</keyword>
<keyword id="KW-0378">Hydrolase</keyword>
<keyword id="KW-0460">Magnesium</keyword>
<keyword id="KW-0479">Metal-binding</keyword>
<keyword id="KW-1185">Reference proteome</keyword>
<accession>A3N298</accession>
<comment type="catalytic activity">
    <reaction evidence="1">
        <text>beta-D-fructose 1,6-bisphosphate + H2O = beta-D-fructose 6-phosphate + phosphate</text>
        <dbReference type="Rhea" id="RHEA:11064"/>
        <dbReference type="ChEBI" id="CHEBI:15377"/>
        <dbReference type="ChEBI" id="CHEBI:32966"/>
        <dbReference type="ChEBI" id="CHEBI:43474"/>
        <dbReference type="ChEBI" id="CHEBI:57634"/>
        <dbReference type="EC" id="3.1.3.11"/>
    </reaction>
</comment>
<comment type="cofactor">
    <cofactor evidence="1">
        <name>Mg(2+)</name>
        <dbReference type="ChEBI" id="CHEBI:18420"/>
    </cofactor>
    <text evidence="1">Binds 2 magnesium ions per subunit.</text>
</comment>
<comment type="pathway">
    <text evidence="1">Carbohydrate biosynthesis; gluconeogenesis.</text>
</comment>
<comment type="subunit">
    <text evidence="1">Homotetramer.</text>
</comment>
<comment type="subcellular location">
    <subcellularLocation>
        <location evidence="1">Cytoplasm</location>
    </subcellularLocation>
</comment>
<comment type="similarity">
    <text evidence="1">Belongs to the FBPase class 1 family.</text>
</comment>
<gene>
    <name evidence="1" type="primary">fbp</name>
    <name type="ordered locus">APL_1450</name>
</gene>
<feature type="chain" id="PRO_0000364453" description="Fructose-1,6-bisphosphatase class 1">
    <location>
        <begin position="1"/>
        <end position="334"/>
    </location>
</feature>
<feature type="binding site" evidence="1">
    <location>
        <position position="90"/>
    </location>
    <ligand>
        <name>Mg(2+)</name>
        <dbReference type="ChEBI" id="CHEBI:18420"/>
        <label>1</label>
    </ligand>
</feature>
<feature type="binding site" evidence="1">
    <location>
        <position position="113"/>
    </location>
    <ligand>
        <name>Mg(2+)</name>
        <dbReference type="ChEBI" id="CHEBI:18420"/>
        <label>1</label>
    </ligand>
</feature>
<feature type="binding site" evidence="1">
    <location>
        <position position="113"/>
    </location>
    <ligand>
        <name>Mg(2+)</name>
        <dbReference type="ChEBI" id="CHEBI:18420"/>
        <label>2</label>
    </ligand>
</feature>
<feature type="binding site" evidence="1">
    <location>
        <position position="115"/>
    </location>
    <ligand>
        <name>Mg(2+)</name>
        <dbReference type="ChEBI" id="CHEBI:18420"/>
        <label>1</label>
    </ligand>
</feature>
<feature type="binding site" evidence="1">
    <location>
        <begin position="116"/>
        <end position="119"/>
    </location>
    <ligand>
        <name>substrate</name>
    </ligand>
</feature>
<feature type="binding site" evidence="1">
    <location>
        <position position="116"/>
    </location>
    <ligand>
        <name>Mg(2+)</name>
        <dbReference type="ChEBI" id="CHEBI:18420"/>
        <label>2</label>
    </ligand>
</feature>
<feature type="binding site" evidence="1">
    <location>
        <position position="209"/>
    </location>
    <ligand>
        <name>substrate</name>
    </ligand>
</feature>
<feature type="binding site" evidence="1">
    <location>
        <position position="242"/>
    </location>
    <ligand>
        <name>substrate</name>
    </ligand>
</feature>
<feature type="binding site" evidence="1">
    <location>
        <position position="272"/>
    </location>
    <ligand>
        <name>substrate</name>
    </ligand>
</feature>
<feature type="binding site" evidence="1">
    <location>
        <position position="278"/>
    </location>
    <ligand>
        <name>Mg(2+)</name>
        <dbReference type="ChEBI" id="CHEBI:18420"/>
        <label>2</label>
    </ligand>
</feature>
<name>F16PA_ACTP2</name>